<dbReference type="EC" id="2.7.1.5" evidence="1"/>
<dbReference type="EMBL" id="Z93938">
    <property type="protein sequence ID" value="CAB07949.1"/>
    <property type="molecule type" value="Genomic_DNA"/>
</dbReference>
<dbReference type="EMBL" id="AL009126">
    <property type="protein sequence ID" value="CAB15098.1"/>
    <property type="molecule type" value="Genomic_DNA"/>
</dbReference>
<dbReference type="PIR" id="E70014">
    <property type="entry name" value="E70014"/>
</dbReference>
<dbReference type="RefSeq" id="NP_390998.1">
    <property type="nucleotide sequence ID" value="NC_000964.3"/>
</dbReference>
<dbReference type="RefSeq" id="WP_003243094.1">
    <property type="nucleotide sequence ID" value="NZ_OZ025638.1"/>
</dbReference>
<dbReference type="SMR" id="O05262"/>
<dbReference type="FunCoup" id="O05262">
    <property type="interactions" value="127"/>
</dbReference>
<dbReference type="STRING" id="224308.BSU31200"/>
<dbReference type="PaxDb" id="224308-BSU31200"/>
<dbReference type="EnsemblBacteria" id="CAB15098">
    <property type="protein sequence ID" value="CAB15098"/>
    <property type="gene ID" value="BSU_31200"/>
</dbReference>
<dbReference type="GeneID" id="938839"/>
<dbReference type="KEGG" id="bsu:BSU31200"/>
<dbReference type="PATRIC" id="fig|224308.179.peg.3380"/>
<dbReference type="eggNOG" id="COG1070">
    <property type="taxonomic scope" value="Bacteria"/>
</dbReference>
<dbReference type="InParanoid" id="O05262"/>
<dbReference type="OrthoDB" id="9761504at2"/>
<dbReference type="PhylomeDB" id="O05262"/>
<dbReference type="BioCyc" id="BSUB:BSU31200-MONOMER"/>
<dbReference type="UniPathway" id="UPA00541">
    <property type="reaction ID" value="UER00602"/>
</dbReference>
<dbReference type="Proteomes" id="UP000001570">
    <property type="component" value="Chromosome"/>
</dbReference>
<dbReference type="GO" id="GO:0005829">
    <property type="term" value="C:cytosol"/>
    <property type="evidence" value="ECO:0000318"/>
    <property type="project" value="GO_Central"/>
</dbReference>
<dbReference type="GO" id="GO:0005524">
    <property type="term" value="F:ATP binding"/>
    <property type="evidence" value="ECO:0007669"/>
    <property type="project" value="UniProtKB-KW"/>
</dbReference>
<dbReference type="GO" id="GO:0004370">
    <property type="term" value="F:glycerol kinase activity"/>
    <property type="evidence" value="ECO:0000318"/>
    <property type="project" value="GO_Central"/>
</dbReference>
<dbReference type="GO" id="GO:0008993">
    <property type="term" value="F:rhamnulokinase activity"/>
    <property type="evidence" value="ECO:0007669"/>
    <property type="project" value="UniProtKB-UniRule"/>
</dbReference>
<dbReference type="GO" id="GO:0019301">
    <property type="term" value="P:rhamnose catabolic process"/>
    <property type="evidence" value="ECO:0000318"/>
    <property type="project" value="GO_Central"/>
</dbReference>
<dbReference type="CDD" id="cd07771">
    <property type="entry name" value="ASKHA_NBD_FGGY_RhaB-like"/>
    <property type="match status" value="1"/>
</dbReference>
<dbReference type="FunFam" id="3.30.420.40:FF:000064">
    <property type="entry name" value="Rhamnulokinase"/>
    <property type="match status" value="1"/>
</dbReference>
<dbReference type="FunFam" id="3.30.420.40:FF:000474">
    <property type="entry name" value="Rhamnulokinase"/>
    <property type="match status" value="1"/>
</dbReference>
<dbReference type="Gene3D" id="3.30.420.40">
    <property type="match status" value="2"/>
</dbReference>
<dbReference type="HAMAP" id="MF_01535">
    <property type="entry name" value="Rhamnulokinase"/>
    <property type="match status" value="1"/>
</dbReference>
<dbReference type="InterPro" id="IPR043129">
    <property type="entry name" value="ATPase_NBD"/>
</dbReference>
<dbReference type="InterPro" id="IPR000577">
    <property type="entry name" value="Carb_kinase_FGGY"/>
</dbReference>
<dbReference type="InterPro" id="IPR018485">
    <property type="entry name" value="FGGY_C"/>
</dbReference>
<dbReference type="InterPro" id="IPR050406">
    <property type="entry name" value="FGGY_Carb_Kinase"/>
</dbReference>
<dbReference type="InterPro" id="IPR018484">
    <property type="entry name" value="FGGY_N"/>
</dbReference>
<dbReference type="InterPro" id="IPR013449">
    <property type="entry name" value="Rhamnulokinase"/>
</dbReference>
<dbReference type="NCBIfam" id="TIGR02627">
    <property type="entry name" value="rhamnulo_kin"/>
    <property type="match status" value="1"/>
</dbReference>
<dbReference type="PANTHER" id="PTHR43095:SF2">
    <property type="entry name" value="GLUCONOKINASE"/>
    <property type="match status" value="1"/>
</dbReference>
<dbReference type="PANTHER" id="PTHR43095">
    <property type="entry name" value="SUGAR KINASE"/>
    <property type="match status" value="1"/>
</dbReference>
<dbReference type="Pfam" id="PF02782">
    <property type="entry name" value="FGGY_C"/>
    <property type="match status" value="1"/>
</dbReference>
<dbReference type="Pfam" id="PF00370">
    <property type="entry name" value="FGGY_N"/>
    <property type="match status" value="1"/>
</dbReference>
<dbReference type="PIRSF" id="PIRSF000538">
    <property type="entry name" value="GlpK"/>
    <property type="match status" value="1"/>
</dbReference>
<dbReference type="SUPFAM" id="SSF53067">
    <property type="entry name" value="Actin-like ATPase domain"/>
    <property type="match status" value="2"/>
</dbReference>
<reference key="1">
    <citation type="journal article" date="1997" name="Microbiology">
        <title>Analysis of the Bacillus subtilis genome: cloning and nucleotide sequence of a 62 kb region between 275 degrees (rrnB) and 284 degrees (pai).</title>
        <authorList>
            <person name="Oudega B."/>
            <person name="Koningstein G."/>
            <person name="Rodrigues L."/>
            <person name="de Sales Ramon M."/>
            <person name="Hilbert H."/>
            <person name="Duesterhoeft A."/>
            <person name="Pohl T.M."/>
            <person name="Weitzenegger T."/>
        </authorList>
    </citation>
    <scope>NUCLEOTIDE SEQUENCE [GENOMIC DNA]</scope>
    <source>
        <strain>168</strain>
    </source>
</reference>
<reference key="2">
    <citation type="journal article" date="1997" name="Nature">
        <title>The complete genome sequence of the Gram-positive bacterium Bacillus subtilis.</title>
        <authorList>
            <person name="Kunst F."/>
            <person name="Ogasawara N."/>
            <person name="Moszer I."/>
            <person name="Albertini A.M."/>
            <person name="Alloni G."/>
            <person name="Azevedo V."/>
            <person name="Bertero M.G."/>
            <person name="Bessieres P."/>
            <person name="Bolotin A."/>
            <person name="Borchert S."/>
            <person name="Borriss R."/>
            <person name="Boursier L."/>
            <person name="Brans A."/>
            <person name="Braun M."/>
            <person name="Brignell S.C."/>
            <person name="Bron S."/>
            <person name="Brouillet S."/>
            <person name="Bruschi C.V."/>
            <person name="Caldwell B."/>
            <person name="Capuano V."/>
            <person name="Carter N.M."/>
            <person name="Choi S.-K."/>
            <person name="Codani J.-J."/>
            <person name="Connerton I.F."/>
            <person name="Cummings N.J."/>
            <person name="Daniel R.A."/>
            <person name="Denizot F."/>
            <person name="Devine K.M."/>
            <person name="Duesterhoeft A."/>
            <person name="Ehrlich S.D."/>
            <person name="Emmerson P.T."/>
            <person name="Entian K.-D."/>
            <person name="Errington J."/>
            <person name="Fabret C."/>
            <person name="Ferrari E."/>
            <person name="Foulger D."/>
            <person name="Fritz C."/>
            <person name="Fujita M."/>
            <person name="Fujita Y."/>
            <person name="Fuma S."/>
            <person name="Galizzi A."/>
            <person name="Galleron N."/>
            <person name="Ghim S.-Y."/>
            <person name="Glaser P."/>
            <person name="Goffeau A."/>
            <person name="Golightly E.J."/>
            <person name="Grandi G."/>
            <person name="Guiseppi G."/>
            <person name="Guy B.J."/>
            <person name="Haga K."/>
            <person name="Haiech J."/>
            <person name="Harwood C.R."/>
            <person name="Henaut A."/>
            <person name="Hilbert H."/>
            <person name="Holsappel S."/>
            <person name="Hosono S."/>
            <person name="Hullo M.-F."/>
            <person name="Itaya M."/>
            <person name="Jones L.-M."/>
            <person name="Joris B."/>
            <person name="Karamata D."/>
            <person name="Kasahara Y."/>
            <person name="Klaerr-Blanchard M."/>
            <person name="Klein C."/>
            <person name="Kobayashi Y."/>
            <person name="Koetter P."/>
            <person name="Koningstein G."/>
            <person name="Krogh S."/>
            <person name="Kumano M."/>
            <person name="Kurita K."/>
            <person name="Lapidus A."/>
            <person name="Lardinois S."/>
            <person name="Lauber J."/>
            <person name="Lazarevic V."/>
            <person name="Lee S.-M."/>
            <person name="Levine A."/>
            <person name="Liu H."/>
            <person name="Masuda S."/>
            <person name="Mauel C."/>
            <person name="Medigue C."/>
            <person name="Medina N."/>
            <person name="Mellado R.P."/>
            <person name="Mizuno M."/>
            <person name="Moestl D."/>
            <person name="Nakai S."/>
            <person name="Noback M."/>
            <person name="Noone D."/>
            <person name="O'Reilly M."/>
            <person name="Ogawa K."/>
            <person name="Ogiwara A."/>
            <person name="Oudega B."/>
            <person name="Park S.-H."/>
            <person name="Parro V."/>
            <person name="Pohl T.M."/>
            <person name="Portetelle D."/>
            <person name="Porwollik S."/>
            <person name="Prescott A.M."/>
            <person name="Presecan E."/>
            <person name="Pujic P."/>
            <person name="Purnelle B."/>
            <person name="Rapoport G."/>
            <person name="Rey M."/>
            <person name="Reynolds S."/>
            <person name="Rieger M."/>
            <person name="Rivolta C."/>
            <person name="Rocha E."/>
            <person name="Roche B."/>
            <person name="Rose M."/>
            <person name="Sadaie Y."/>
            <person name="Sato T."/>
            <person name="Scanlan E."/>
            <person name="Schleich S."/>
            <person name="Schroeter R."/>
            <person name="Scoffone F."/>
            <person name="Sekiguchi J."/>
            <person name="Sekowska A."/>
            <person name="Seror S.J."/>
            <person name="Serror P."/>
            <person name="Shin B.-S."/>
            <person name="Soldo B."/>
            <person name="Sorokin A."/>
            <person name="Tacconi E."/>
            <person name="Takagi T."/>
            <person name="Takahashi H."/>
            <person name="Takemaru K."/>
            <person name="Takeuchi M."/>
            <person name="Tamakoshi A."/>
            <person name="Tanaka T."/>
            <person name="Terpstra P."/>
            <person name="Tognoni A."/>
            <person name="Tosato V."/>
            <person name="Uchiyama S."/>
            <person name="Vandenbol M."/>
            <person name="Vannier F."/>
            <person name="Vassarotti A."/>
            <person name="Viari A."/>
            <person name="Wambutt R."/>
            <person name="Wedler E."/>
            <person name="Wedler H."/>
            <person name="Weitzenegger T."/>
            <person name="Winters P."/>
            <person name="Wipat A."/>
            <person name="Yamamoto H."/>
            <person name="Yamane K."/>
            <person name="Yasumoto K."/>
            <person name="Yata K."/>
            <person name="Yoshida K."/>
            <person name="Yoshikawa H.-F."/>
            <person name="Zumstein E."/>
            <person name="Yoshikawa H."/>
            <person name="Danchin A."/>
        </authorList>
    </citation>
    <scope>NUCLEOTIDE SEQUENCE [LARGE SCALE GENOMIC DNA]</scope>
    <source>
        <strain>168</strain>
    </source>
</reference>
<gene>
    <name evidence="1" type="primary">rhaB</name>
    <name type="synonym">yulC</name>
    <name type="ordered locus">BSU31200</name>
</gene>
<proteinExistence type="inferred from homology"/>
<feature type="chain" id="PRO_0000090529" description="Rhamnulokinase">
    <location>
        <begin position="1"/>
        <end position="485"/>
    </location>
</feature>
<feature type="active site" description="Proton acceptor" evidence="1">
    <location>
        <position position="234"/>
    </location>
</feature>
<feature type="binding site" evidence="1">
    <location>
        <begin position="10"/>
        <end position="14"/>
    </location>
    <ligand>
        <name>ATP</name>
        <dbReference type="ChEBI" id="CHEBI:30616"/>
    </ligand>
</feature>
<feature type="binding site" evidence="1">
    <location>
        <position position="78"/>
    </location>
    <ligand>
        <name>substrate</name>
    </ligand>
</feature>
<feature type="binding site" evidence="1">
    <location>
        <begin position="233"/>
        <end position="235"/>
    </location>
    <ligand>
        <name>substrate</name>
    </ligand>
</feature>
<feature type="binding site" evidence="1">
    <location>
        <position position="256"/>
    </location>
    <ligand>
        <name>ATP</name>
        <dbReference type="ChEBI" id="CHEBI:30616"/>
    </ligand>
</feature>
<feature type="binding site" evidence="1">
    <location>
        <position position="293"/>
    </location>
    <ligand>
        <name>substrate</name>
    </ligand>
</feature>
<feature type="binding site" evidence="1">
    <location>
        <position position="301"/>
    </location>
    <ligand>
        <name>ATP</name>
        <dbReference type="ChEBI" id="CHEBI:30616"/>
    </ligand>
</feature>
<feature type="binding site" evidence="1">
    <location>
        <position position="400"/>
    </location>
    <ligand>
        <name>ATP</name>
        <dbReference type="ChEBI" id="CHEBI:30616"/>
    </ligand>
</feature>
<feature type="disulfide bond" evidence="1">
    <location>
        <begin position="351"/>
        <end position="368"/>
    </location>
</feature>
<sequence length="485" mass="54736">MIYTAIDVGASSGRIMVGELNEGKLDIQEIHRFANGFSQRDGHCLWDIDHLLKQILQGLQKVKTLGYEHCTVGIDTWAVDYVLLDEKGDRLREAISYRDRRTDHTIDKLEHTLSKAAIYQKTGIQFQPFNTIYQLFEEDRELLKKTDKIMMIPDYLGYCLTGKAVTEITNVSTTQLLNVSTGNLDPELLEAVSVLEQQFAPLTEPGCELGKLRNEWFPDYDLPACKVMTVATHDTASAVIAAPGVNDGWAYISSGTWSLIGVENKTPIITDLALENNYTNERGANNTIRFLKNIIGMWVIQEVKQQLQADYSFQQLAEEAKKTEPFQQFINLNDKRFLNPENMIKEIQHYCRQTRQKIPRTAGELACCIYSNLAIIYAIAIKELETITEKPIEQFHIIGGGARNDFLNQLTADMSGKAVYAGPIEATATGNLLMQMIAAKEVKDIKEARQVVRNSFPIKVFTPKDIDRSTIIQSFQQTVLKALSK</sequence>
<protein>
    <recommendedName>
        <fullName evidence="1">Rhamnulokinase</fullName>
        <shortName evidence="1">RhaB</shortName>
        <ecNumber evidence="1">2.7.1.5</ecNumber>
    </recommendedName>
    <alternativeName>
        <fullName evidence="1">ATP:L-rhamnulose phosphotransferase</fullName>
    </alternativeName>
    <alternativeName>
        <fullName evidence="1">L-rhamnulose 1-kinase</fullName>
    </alternativeName>
    <alternativeName>
        <fullName evidence="1">Rhamnulose kinase</fullName>
    </alternativeName>
</protein>
<keyword id="KW-0067">ATP-binding</keyword>
<keyword id="KW-1015">Disulfide bond</keyword>
<keyword id="KW-0418">Kinase</keyword>
<keyword id="KW-0460">Magnesium</keyword>
<keyword id="KW-0547">Nucleotide-binding</keyword>
<keyword id="KW-1185">Reference proteome</keyword>
<keyword id="KW-0684">Rhamnose metabolism</keyword>
<keyword id="KW-0808">Transferase</keyword>
<comment type="function">
    <text evidence="1">Involved in the catabolism of L-rhamnose (6-deoxy-L-mannose). Catalyzes the transfer of the gamma-phosphate group from ATP to the 1-hydroxyl group of L-rhamnulose to yield L-rhamnulose 1-phosphate.</text>
</comment>
<comment type="catalytic activity">
    <reaction evidence="1">
        <text>L-rhamnulose + ATP = L-rhamnulose 1-phosphate + ADP + H(+)</text>
        <dbReference type="Rhea" id="RHEA:20117"/>
        <dbReference type="ChEBI" id="CHEBI:15378"/>
        <dbReference type="ChEBI" id="CHEBI:17897"/>
        <dbReference type="ChEBI" id="CHEBI:30616"/>
        <dbReference type="ChEBI" id="CHEBI:58313"/>
        <dbReference type="ChEBI" id="CHEBI:456216"/>
        <dbReference type="EC" id="2.7.1.5"/>
    </reaction>
</comment>
<comment type="cofactor">
    <cofactor evidence="1">
        <name>Mg(2+)</name>
        <dbReference type="ChEBI" id="CHEBI:18420"/>
    </cofactor>
</comment>
<comment type="pathway">
    <text evidence="1">Carbohydrate degradation; L-rhamnose degradation; glycerone phosphate from L-rhamnose: step 2/3.</text>
</comment>
<comment type="similarity">
    <text evidence="1">Belongs to the rhamnulokinase family.</text>
</comment>
<evidence type="ECO:0000255" key="1">
    <source>
        <dbReference type="HAMAP-Rule" id="MF_01535"/>
    </source>
</evidence>
<organism>
    <name type="scientific">Bacillus subtilis (strain 168)</name>
    <dbReference type="NCBI Taxonomy" id="224308"/>
    <lineage>
        <taxon>Bacteria</taxon>
        <taxon>Bacillati</taxon>
        <taxon>Bacillota</taxon>
        <taxon>Bacilli</taxon>
        <taxon>Bacillales</taxon>
        <taxon>Bacillaceae</taxon>
        <taxon>Bacillus</taxon>
    </lineage>
</organism>
<name>RHAB_BACSU</name>
<accession>O05262</accession>
<accession>Q795N1</accession>